<name>PETG_NANDO</name>
<reference key="1">
    <citation type="journal article" date="2006" name="BMC Plant Biol.">
        <title>Rapid and accurate pyrosequencing of angiosperm plastid genomes.</title>
        <authorList>
            <person name="Moore M.J."/>
            <person name="Dhingra A."/>
            <person name="Soltis P.S."/>
            <person name="Shaw R."/>
            <person name="Farmerie W.G."/>
            <person name="Folta K.M."/>
            <person name="Soltis D.E."/>
        </authorList>
    </citation>
    <scope>NUCLEOTIDE SEQUENCE [LARGE SCALE GENOMIC DNA]</scope>
</reference>
<comment type="function">
    <text evidence="1">Component of the cytochrome b6-f complex, which mediates electron transfer between photosystem II (PSII) and photosystem I (PSI), cyclic electron flow around PSI, and state transitions. PetG is required for either the stability or assembly of the cytochrome b6-f complex.</text>
</comment>
<comment type="subunit">
    <text evidence="1">The 4 large subunits of the cytochrome b6-f complex are cytochrome b6, subunit IV (17 kDa polypeptide, PetD), cytochrome f and the Rieske protein, while the 4 small subunits are PetG, PetL, PetM and PetN. The complex functions as a dimer.</text>
</comment>
<comment type="subcellular location">
    <subcellularLocation>
        <location evidence="1">Plastid</location>
        <location evidence="1">Chloroplast thylakoid membrane</location>
        <topology evidence="1">Single-pass membrane protein</topology>
    </subcellularLocation>
</comment>
<comment type="similarity">
    <text evidence="1">Belongs to the PetG family.</text>
</comment>
<organism>
    <name type="scientific">Nandina domestica</name>
    <name type="common">Heavenly bamboo</name>
    <dbReference type="NCBI Taxonomy" id="41776"/>
    <lineage>
        <taxon>Eukaryota</taxon>
        <taxon>Viridiplantae</taxon>
        <taxon>Streptophyta</taxon>
        <taxon>Embryophyta</taxon>
        <taxon>Tracheophyta</taxon>
        <taxon>Spermatophyta</taxon>
        <taxon>Magnoliopsida</taxon>
        <taxon>Ranunculales</taxon>
        <taxon>Berberidaceae</taxon>
        <taxon>Nandinoideae</taxon>
        <taxon>Nandineae</taxon>
        <taxon>Nandina</taxon>
    </lineage>
</organism>
<accession>Q09FU2</accession>
<evidence type="ECO:0000255" key="1">
    <source>
        <dbReference type="HAMAP-Rule" id="MF_00432"/>
    </source>
</evidence>
<proteinExistence type="inferred from homology"/>
<feature type="chain" id="PRO_0000355399" description="Cytochrome b6-f complex subunit 5">
    <location>
        <begin position="1"/>
        <end position="37"/>
    </location>
</feature>
<feature type="transmembrane region" description="Helical" evidence="1">
    <location>
        <begin position="5"/>
        <end position="25"/>
    </location>
</feature>
<geneLocation type="chloroplast"/>
<protein>
    <recommendedName>
        <fullName evidence="1">Cytochrome b6-f complex subunit 5</fullName>
    </recommendedName>
    <alternativeName>
        <fullName evidence="1">Cytochrome b6-f complex subunit PetG</fullName>
    </alternativeName>
    <alternativeName>
        <fullName evidence="1">Cytochrome b6-f complex subunit V</fullName>
    </alternativeName>
</protein>
<dbReference type="EMBL" id="DQ923117">
    <property type="protein sequence ID" value="ABI49882.1"/>
    <property type="molecule type" value="Genomic_DNA"/>
</dbReference>
<dbReference type="RefSeq" id="YP_740669.1">
    <property type="nucleotide sequence ID" value="NC_008336.1"/>
</dbReference>
<dbReference type="SMR" id="Q09FU2"/>
<dbReference type="GeneID" id="4271615"/>
<dbReference type="GO" id="GO:0009535">
    <property type="term" value="C:chloroplast thylakoid membrane"/>
    <property type="evidence" value="ECO:0007669"/>
    <property type="project" value="UniProtKB-SubCell"/>
</dbReference>
<dbReference type="GO" id="GO:0009512">
    <property type="term" value="C:cytochrome b6f complex"/>
    <property type="evidence" value="ECO:0007669"/>
    <property type="project" value="InterPro"/>
</dbReference>
<dbReference type="GO" id="GO:0045158">
    <property type="term" value="F:electron transporter, transferring electrons within cytochrome b6/f complex of photosystem II activity"/>
    <property type="evidence" value="ECO:0007669"/>
    <property type="project" value="UniProtKB-UniRule"/>
</dbReference>
<dbReference type="GO" id="GO:0017004">
    <property type="term" value="P:cytochrome complex assembly"/>
    <property type="evidence" value="ECO:0007669"/>
    <property type="project" value="UniProtKB-UniRule"/>
</dbReference>
<dbReference type="GO" id="GO:0015979">
    <property type="term" value="P:photosynthesis"/>
    <property type="evidence" value="ECO:0007669"/>
    <property type="project" value="UniProtKB-KW"/>
</dbReference>
<dbReference type="HAMAP" id="MF_00432">
    <property type="entry name" value="Cytb6_f_PetG"/>
    <property type="match status" value="1"/>
</dbReference>
<dbReference type="InterPro" id="IPR003683">
    <property type="entry name" value="Cyt_6/f_cplx_su5"/>
</dbReference>
<dbReference type="InterPro" id="IPR036099">
    <property type="entry name" value="Cyt_6/f_cplx_su5_sf"/>
</dbReference>
<dbReference type="NCBIfam" id="NF001907">
    <property type="entry name" value="PRK00665.1"/>
    <property type="match status" value="1"/>
</dbReference>
<dbReference type="Pfam" id="PF02529">
    <property type="entry name" value="PetG"/>
    <property type="match status" value="1"/>
</dbReference>
<dbReference type="PIRSF" id="PIRSF000034">
    <property type="entry name" value="Cyt_b6-f_V"/>
    <property type="match status" value="1"/>
</dbReference>
<dbReference type="SUPFAM" id="SSF103446">
    <property type="entry name" value="PetG subunit of the cytochrome b6f complex"/>
    <property type="match status" value="1"/>
</dbReference>
<sequence>MIEVLLFGIVLGLIPITLAGLFVTAYLQYRRGDQLDL</sequence>
<keyword id="KW-0150">Chloroplast</keyword>
<keyword id="KW-0249">Electron transport</keyword>
<keyword id="KW-0472">Membrane</keyword>
<keyword id="KW-0602">Photosynthesis</keyword>
<keyword id="KW-0934">Plastid</keyword>
<keyword id="KW-0793">Thylakoid</keyword>
<keyword id="KW-0812">Transmembrane</keyword>
<keyword id="KW-1133">Transmembrane helix</keyword>
<keyword id="KW-0813">Transport</keyword>
<gene>
    <name evidence="1" type="primary">petG</name>
</gene>